<evidence type="ECO:0000255" key="1"/>
<evidence type="ECO:0000255" key="2">
    <source>
        <dbReference type="PROSITE-ProRule" id="PRU00145"/>
    </source>
</evidence>
<evidence type="ECO:0000255" key="3">
    <source>
        <dbReference type="PROSITE-ProRule" id="PRU00283"/>
    </source>
</evidence>
<evidence type="ECO:0000256" key="4">
    <source>
        <dbReference type="SAM" id="MobiDB-lite"/>
    </source>
</evidence>
<evidence type="ECO:0000269" key="5">
    <source>
    </source>
</evidence>
<evidence type="ECO:0000269" key="6">
    <source>
    </source>
</evidence>
<dbReference type="EMBL" id="AF245277">
    <property type="protein sequence ID" value="AAF63384.1"/>
    <property type="molecule type" value="mRNA"/>
</dbReference>
<dbReference type="EMBL" id="AAFI02000174">
    <property type="protein sequence ID" value="EAL61912.1"/>
    <property type="molecule type" value="Genomic_DNA"/>
</dbReference>
<dbReference type="RefSeq" id="XP_635456.1">
    <property type="nucleotide sequence ID" value="XM_630364.1"/>
</dbReference>
<dbReference type="SMR" id="Q9NGQ2"/>
<dbReference type="FunCoup" id="Q9NGQ2">
    <property type="interactions" value="9"/>
</dbReference>
<dbReference type="STRING" id="44689.Q9NGQ2"/>
<dbReference type="PaxDb" id="44689-DDB0201559"/>
<dbReference type="EnsemblProtists" id="EAL61912">
    <property type="protein sequence ID" value="EAL61912"/>
    <property type="gene ID" value="DDB_G0290963"/>
</dbReference>
<dbReference type="GeneID" id="8627956"/>
<dbReference type="KEGG" id="ddi:DDB_G0290963"/>
<dbReference type="dictyBase" id="DDB_G0290963">
    <property type="gene designation" value="kif1"/>
</dbReference>
<dbReference type="VEuPathDB" id="AmoebaDB:DDB_G0290963"/>
<dbReference type="eggNOG" id="KOG0245">
    <property type="taxonomic scope" value="Eukaryota"/>
</dbReference>
<dbReference type="HOGENOM" id="CLU_231165_0_0_1"/>
<dbReference type="InParanoid" id="Q9NGQ2"/>
<dbReference type="OMA" id="AEYANGM"/>
<dbReference type="PRO" id="PR:Q9NGQ2"/>
<dbReference type="Proteomes" id="UP000002195">
    <property type="component" value="Chromosome 5"/>
</dbReference>
<dbReference type="GO" id="GO:0005737">
    <property type="term" value="C:cytoplasm"/>
    <property type="evidence" value="ECO:0000318"/>
    <property type="project" value="GO_Central"/>
</dbReference>
<dbReference type="GO" id="GO:0030659">
    <property type="term" value="C:cytoplasmic vesicle membrane"/>
    <property type="evidence" value="ECO:0007669"/>
    <property type="project" value="UniProtKB-SubCell"/>
</dbReference>
<dbReference type="GO" id="GO:0005871">
    <property type="term" value="C:kinesin complex"/>
    <property type="evidence" value="ECO:0000318"/>
    <property type="project" value="GO_Central"/>
</dbReference>
<dbReference type="GO" id="GO:0005874">
    <property type="term" value="C:microtubule"/>
    <property type="evidence" value="ECO:0000318"/>
    <property type="project" value="GO_Central"/>
</dbReference>
<dbReference type="GO" id="GO:0005524">
    <property type="term" value="F:ATP binding"/>
    <property type="evidence" value="ECO:0007669"/>
    <property type="project" value="UniProtKB-KW"/>
</dbReference>
<dbReference type="GO" id="GO:0016887">
    <property type="term" value="F:ATP hydrolysis activity"/>
    <property type="evidence" value="ECO:0000318"/>
    <property type="project" value="GO_Central"/>
</dbReference>
<dbReference type="GO" id="GO:0042802">
    <property type="term" value="F:identical protein binding"/>
    <property type="evidence" value="ECO:0000353"/>
    <property type="project" value="dictyBase"/>
</dbReference>
<dbReference type="GO" id="GO:0008017">
    <property type="term" value="F:microtubule binding"/>
    <property type="evidence" value="ECO:0000318"/>
    <property type="project" value="GO_Central"/>
</dbReference>
<dbReference type="GO" id="GO:0003777">
    <property type="term" value="F:microtubule motor activity"/>
    <property type="evidence" value="ECO:0000318"/>
    <property type="project" value="GO_Central"/>
</dbReference>
<dbReference type="GO" id="GO:0005546">
    <property type="term" value="F:phosphatidylinositol-4,5-bisphosphate binding"/>
    <property type="evidence" value="ECO:0000314"/>
    <property type="project" value="dictyBase"/>
</dbReference>
<dbReference type="GO" id="GO:0008574">
    <property type="term" value="F:plus-end-directed microtubule motor activity"/>
    <property type="evidence" value="ECO:0000314"/>
    <property type="project" value="dictyBase"/>
</dbReference>
<dbReference type="GO" id="GO:0072386">
    <property type="term" value="P:plus-end-directed organelle transport along microtubule"/>
    <property type="evidence" value="ECO:0000314"/>
    <property type="project" value="dictyBase"/>
</dbReference>
<dbReference type="GO" id="GO:0072383">
    <property type="term" value="P:plus-end-directed vesicle transport along microtubule"/>
    <property type="evidence" value="ECO:0000314"/>
    <property type="project" value="dictyBase"/>
</dbReference>
<dbReference type="GO" id="GO:0047496">
    <property type="term" value="P:vesicle transport along microtubule"/>
    <property type="evidence" value="ECO:0000315"/>
    <property type="project" value="dictyBase"/>
</dbReference>
<dbReference type="CDD" id="cd01365">
    <property type="entry name" value="KISc_KIF1A_KIF1B"/>
    <property type="match status" value="1"/>
</dbReference>
<dbReference type="CDD" id="cd00821">
    <property type="entry name" value="PH"/>
    <property type="match status" value="1"/>
</dbReference>
<dbReference type="FunFam" id="3.40.850.10:FF:000047">
    <property type="entry name" value="Kinesin family protein"/>
    <property type="match status" value="1"/>
</dbReference>
<dbReference type="FunFam" id="2.60.200.20:FF:000158">
    <property type="entry name" value="Kinesin-related protein 1"/>
    <property type="match status" value="1"/>
</dbReference>
<dbReference type="Gene3D" id="2.60.200.20">
    <property type="match status" value="2"/>
</dbReference>
<dbReference type="Gene3D" id="6.10.250.2520">
    <property type="match status" value="1"/>
</dbReference>
<dbReference type="Gene3D" id="3.40.850.10">
    <property type="entry name" value="Kinesin motor domain"/>
    <property type="match status" value="1"/>
</dbReference>
<dbReference type="Gene3D" id="2.30.29.30">
    <property type="entry name" value="Pleckstrin-homology domain (PH domain)/Phosphotyrosine-binding domain (PTB)"/>
    <property type="match status" value="1"/>
</dbReference>
<dbReference type="InterPro" id="IPR032405">
    <property type="entry name" value="Kinesin_assoc"/>
</dbReference>
<dbReference type="InterPro" id="IPR019821">
    <property type="entry name" value="Kinesin_motor_CS"/>
</dbReference>
<dbReference type="InterPro" id="IPR001752">
    <property type="entry name" value="Kinesin_motor_dom"/>
</dbReference>
<dbReference type="InterPro" id="IPR036961">
    <property type="entry name" value="Kinesin_motor_dom_sf"/>
</dbReference>
<dbReference type="InterPro" id="IPR027417">
    <property type="entry name" value="P-loop_NTPase"/>
</dbReference>
<dbReference type="InterPro" id="IPR011993">
    <property type="entry name" value="PH-like_dom_sf"/>
</dbReference>
<dbReference type="InterPro" id="IPR001849">
    <property type="entry name" value="PH_domain"/>
</dbReference>
<dbReference type="InterPro" id="IPR008984">
    <property type="entry name" value="SMAD_FHA_dom_sf"/>
</dbReference>
<dbReference type="PANTHER" id="PTHR47117:SF10">
    <property type="entry name" value="KINESIN-LIKE PROTEIN KIF1B"/>
    <property type="match status" value="1"/>
</dbReference>
<dbReference type="PANTHER" id="PTHR47117">
    <property type="entry name" value="STAR-RELATED LIPID TRANSFER PROTEIN 9"/>
    <property type="match status" value="1"/>
</dbReference>
<dbReference type="Pfam" id="PF00225">
    <property type="entry name" value="Kinesin"/>
    <property type="match status" value="1"/>
</dbReference>
<dbReference type="Pfam" id="PF16183">
    <property type="entry name" value="Kinesin_assoc"/>
    <property type="match status" value="1"/>
</dbReference>
<dbReference type="Pfam" id="PF00169">
    <property type="entry name" value="PH"/>
    <property type="match status" value="1"/>
</dbReference>
<dbReference type="PRINTS" id="PR00380">
    <property type="entry name" value="KINESINHEAVY"/>
</dbReference>
<dbReference type="SMART" id="SM00129">
    <property type="entry name" value="KISc"/>
    <property type="match status" value="1"/>
</dbReference>
<dbReference type="SMART" id="SM00233">
    <property type="entry name" value="PH"/>
    <property type="match status" value="1"/>
</dbReference>
<dbReference type="SUPFAM" id="SSF52540">
    <property type="entry name" value="P-loop containing nucleoside triphosphate hydrolases"/>
    <property type="match status" value="1"/>
</dbReference>
<dbReference type="SUPFAM" id="SSF50729">
    <property type="entry name" value="PH domain-like"/>
    <property type="match status" value="1"/>
</dbReference>
<dbReference type="SUPFAM" id="SSF49879">
    <property type="entry name" value="SMAD/FHA domain"/>
    <property type="match status" value="2"/>
</dbReference>
<dbReference type="PROSITE" id="PS00411">
    <property type="entry name" value="KINESIN_MOTOR_1"/>
    <property type="match status" value="1"/>
</dbReference>
<dbReference type="PROSITE" id="PS50067">
    <property type="entry name" value="KINESIN_MOTOR_2"/>
    <property type="match status" value="1"/>
</dbReference>
<dbReference type="PROSITE" id="PS50003">
    <property type="entry name" value="PH_DOMAIN"/>
    <property type="match status" value="1"/>
</dbReference>
<comment type="function">
    <text evidence="5 6">Microtubule-associated force-producing protein that plays a role in organelle transport. Its motor activity is directed toward the microtubule's plus end. Transports cytoplasmic vesicles and particularly phosphatidylinositol 4,5-bisphosphate-containing liposomes along microtubules.</text>
</comment>
<comment type="subunit">
    <text evidence="5">Homodimer.</text>
</comment>
<comment type="subcellular location">
    <subcellularLocation>
        <location evidence="6">Cytoplasm</location>
        <location evidence="6">Cytoskeleton</location>
    </subcellularLocation>
    <subcellularLocation>
        <location evidence="6">Cytoplasmic vesicle membrane</location>
        <topology evidence="6">Peripheral membrane protein</topology>
        <orientation evidence="6">Cytoplasmic side</orientation>
    </subcellularLocation>
</comment>
<comment type="domain">
    <text evidence="6">The PH domain is required for kif1-mediated transport probably through its binding and docking onto membrane of cargo vesicles.</text>
</comment>
<comment type="similarity">
    <text evidence="3">Belongs to the TRAFAC class myosin-kinesin ATPase superfamily. Kinesin family. Unc-104 subfamily.</text>
</comment>
<accession>Q9NGQ2</accession>
<accession>Q54F81</accession>
<feature type="chain" id="PRO_0000365576" description="Kinesin-related protein 1">
    <location>
        <begin position="1"/>
        <end position="2205"/>
    </location>
</feature>
<feature type="domain" description="Kinesin motor" evidence="3">
    <location>
        <begin position="2"/>
        <end position="355"/>
    </location>
</feature>
<feature type="domain" description="FHA">
    <location>
        <begin position="483"/>
        <end position="595"/>
    </location>
</feature>
<feature type="domain" description="PH" evidence="2">
    <location>
        <begin position="1523"/>
        <end position="1616"/>
    </location>
</feature>
<feature type="region of interest" description="Disordered" evidence="4">
    <location>
        <begin position="525"/>
        <end position="568"/>
    </location>
</feature>
<feature type="region of interest" description="Disordered" evidence="4">
    <location>
        <begin position="971"/>
        <end position="993"/>
    </location>
</feature>
<feature type="region of interest" description="Disordered" evidence="4">
    <location>
        <begin position="1084"/>
        <end position="1226"/>
    </location>
</feature>
<feature type="region of interest" description="Disordered" evidence="4">
    <location>
        <begin position="1455"/>
        <end position="1508"/>
    </location>
</feature>
<feature type="coiled-coil region" evidence="1">
    <location>
        <begin position="362"/>
        <end position="448"/>
    </location>
</feature>
<feature type="coiled-coil region" evidence="1">
    <location>
        <begin position="1879"/>
        <end position="1918"/>
    </location>
</feature>
<feature type="coiled-coil region" evidence="1">
    <location>
        <begin position="1946"/>
        <end position="2034"/>
    </location>
</feature>
<feature type="coiled-coil region" evidence="1">
    <location>
        <begin position="2075"/>
        <end position="2149"/>
    </location>
</feature>
<feature type="compositionally biased region" description="Low complexity" evidence="4">
    <location>
        <begin position="525"/>
        <end position="548"/>
    </location>
</feature>
<feature type="compositionally biased region" description="Basic and acidic residues" evidence="4">
    <location>
        <begin position="549"/>
        <end position="568"/>
    </location>
</feature>
<feature type="compositionally biased region" description="Low complexity" evidence="4">
    <location>
        <begin position="978"/>
        <end position="991"/>
    </location>
</feature>
<feature type="compositionally biased region" description="Low complexity" evidence="4">
    <location>
        <begin position="1089"/>
        <end position="1103"/>
    </location>
</feature>
<feature type="compositionally biased region" description="Low complexity" evidence="4">
    <location>
        <begin position="1117"/>
        <end position="1142"/>
    </location>
</feature>
<feature type="compositionally biased region" description="Polar residues" evidence="4">
    <location>
        <begin position="1143"/>
        <end position="1164"/>
    </location>
</feature>
<feature type="compositionally biased region" description="Low complexity" evidence="4">
    <location>
        <begin position="1169"/>
        <end position="1226"/>
    </location>
</feature>
<feature type="compositionally biased region" description="Low complexity" evidence="4">
    <location>
        <begin position="1455"/>
        <end position="1492"/>
    </location>
</feature>
<feature type="binding site" evidence="3">
    <location>
        <begin position="102"/>
        <end position="109"/>
    </location>
    <ligand>
        <name>ATP</name>
        <dbReference type="ChEBI" id="CHEBI:30616"/>
    </ligand>
</feature>
<feature type="mutagenesis site" description="Decreases liposome transport in vitro.">
    <original>KKK</original>
    <variation>EEE</variation>
    <location>
        <begin position="1531"/>
        <end position="1533"/>
    </location>
</feature>
<keyword id="KW-0067">ATP-binding</keyword>
<keyword id="KW-0175">Coiled coil</keyword>
<keyword id="KW-0963">Cytoplasm</keyword>
<keyword id="KW-0968">Cytoplasmic vesicle</keyword>
<keyword id="KW-0206">Cytoskeleton</keyword>
<keyword id="KW-0472">Membrane</keyword>
<keyword id="KW-0493">Microtubule</keyword>
<keyword id="KW-0505">Motor protein</keyword>
<keyword id="KW-0547">Nucleotide-binding</keyword>
<keyword id="KW-1185">Reference proteome</keyword>
<keyword id="KW-0813">Transport</keyword>
<sequence>MNVQVAVRVRPFNSREKERNAELIVQMNNKSTILTRPSALRANPLAAPTADDEKSFSFDYSYWSYDSNDPHFASQSTVYNDLGKEVLKNAWDGFNCSIFAYGQTGSGKSYSMMGYGEEKGIIPLICEELFQRIQSTPSNSNEQTIYKTTVSYMEIYNEKVKDLLNPNNNKTGGLKVRNNPSTGPYVEDLSKLAVKSFSEIDMLMDEGSKARTVASTNMNATSSRSHAVFTIVFTQSKIDKTRGTAIDRVSKISLVDLAGSERANSTGATGVRLKEGANINKSLSTLGKVISALAENSTSKKAVFVPYRDSVLTYLLKETLGGNSKTIMIAAISPADINYEESLSTLRYADSAKKIKTVAVVNEDAQSKLIRELQGEVERLRAMMDQGGQYHANDSKLMNSDYDETVSTLNEKIEQYEKLMAELNKSWEEKLSEAEAIREDRMAALKDMGVAIKVVSSIPHLINLNEDPLMSESLIYYVKEGKTRIGRSDSEIPQDIILNGLNIHKEHCIFENINGKVIISPSNNFMNNNNNKENSSSTTPTSSKSPSKPKSEKEKENNNDDDDGEKKLDRSYIYVNGVEINKPTILTTGNRVILGNNHIFRFNNPEEAIKIARERNQTTGGIVSSTKSPVDQIMDYDFALNELASIQGTLAMSKHINDKQEYKKQMRALYDQIRLQLENDCDPEVKEQREKLALLAFRRWRSKVHRSKLLNKISFIILSLNEANAISSTLNKKINLSLKLYSVFPEPDQISDNIEPEIDWRKTQILIKATDSSTGESTLVTDQDFVDRIYLMRELYQNDGRLDTELPEDPFQFTFTKDSLIGVSHVYLKNTLYLVESNRPVPILDENGNQKGYLNLLVSSSSTDITESERGLYLENPSNNKSLLLGKNLEITIGFEGFSEFIDENKFSDVFIKFNFPNQNGTIVDTFLTEPQPISAFIDQKRIVITSLTESLINLLQTQYVSFEIRGHKKSKQQPKLTSSSSSASTTSSSSKNQPMLENFEFLATLNILESEKNTGTDDQYKPVHILEDPDVYNTHLPSVTFRLKKDKTNRQILFKVIKNESNSIIKECKSARISDIKIFGKRDNPLLSSSATPNTPNTPNNSRIAGIQNTPGTPMTPYSNQTNNQQSSSSQPPLPQQQGTPYNPQSNNPNVISNAPPTPNSNLLKDLSLAANVQTSSSSSSSSLNVLLNNQQQQQQSQQSQQQQQQQSQQSSETSSTTNSITNSASNSSLSLLVNNQTTNSNNSGGNIFEIPVLSCTDDSVLLLWKTNDPSFIFNQKTRKGDKILFKLTFDLLIQGFPDVVSISKDIAIKILSSESMPSATMPDGTSSSSMSNLLDKFKTHFKGESILSEPSIHAGSVFSINLTKSRQQEHQNRIGEMIDAHQENILKLGYAMKMEKLRQELDLREKLTNLKEKTIDSTNTDDVNAANGVAESSNSSTIDVEEIVKKMLLMNSTHQQQQQNFSSPSSTSPTLVNGESSPKSGRSSNTTSSSSGGGGGGGRKRSSTIVEVKVKEVPSSALLKEDETSGYLKKKSAFKEEWKPRWFVFKKPYLYYSHNQKDTHKLKKIDLTNSSVAITQDEVPFGFAIIQLRRVWLLQANSVEDRDKWVQTLDPLRKVTELKDEELRTAKQQIEKSSSQLDQIKSQLQTGQQIVLAKQKEIEELTNTISQLQLEKEINTQQFDGLRDEIQNRDEELEQYKSQQSQKINQLSGQVNKLENVTQEKELTIGSLSSTLNNTNQIIELINEQSKSYKNVAEMEIESLRDETTQLRETSQLLANRLKECRSSIQSAESLLSERDLEITQLKALLTQQEESSGITSLNLKNLQSDQTMKQGQIDILSKTVQQSTATIQNISSQLDSTTKASDSKDEQITSINSAYKDESDRLKDQTTQLNSLTTNLRQQMRSLEQTHLQQKETSASDQKTLLLLLHDMEQGLTRASQTITDQSAQVTVLKKQLEDSKKSNEQLPTVEKQLSLMKDRLIQSENQLIDRECENTILSDKLKLWEEEIKIKDSKLSLLENNVKEVRAEYANGMAFSREFSQHHTDSGSISGKFNRRSKQISAEEQMETLRESSIAHQSHNAFLNSQIQRLETEMRTQEKVYSDTIQRIKKDLQQRNQQNIAFMKHQVGDEIVKKMEDVTASMEILKKKYFVSLVVAAKLQNAMMGNICNVDAYELYEQSVVEHILDQDQWPNWIAQTISTQNKHL</sequence>
<reference key="1">
    <citation type="journal article" date="1999" name="J. Cell Biol.">
        <title>Reconstitution of membrane transport powered by a novel dimeric kinesin motor of the Unc104/KIF1A family purified from Dictyostelium.</title>
        <authorList>
            <person name="Pollock N."/>
            <person name="de Hostos E.L."/>
            <person name="Turck C.W."/>
            <person name="Vale R.D."/>
        </authorList>
    </citation>
    <scope>NUCLEOTIDE SEQUENCE [MRNA]</scope>
    <scope>FUNCTION</scope>
    <scope>SUBUNIT</scope>
</reference>
<reference key="2">
    <citation type="journal article" date="2005" name="Nature">
        <title>The genome of the social amoeba Dictyostelium discoideum.</title>
        <authorList>
            <person name="Eichinger L."/>
            <person name="Pachebat J.A."/>
            <person name="Gloeckner G."/>
            <person name="Rajandream M.A."/>
            <person name="Sucgang R."/>
            <person name="Berriman M."/>
            <person name="Song J."/>
            <person name="Olsen R."/>
            <person name="Szafranski K."/>
            <person name="Xu Q."/>
            <person name="Tunggal B."/>
            <person name="Kummerfeld S."/>
            <person name="Madera M."/>
            <person name="Konfortov B.A."/>
            <person name="Rivero F."/>
            <person name="Bankier A.T."/>
            <person name="Lehmann R."/>
            <person name="Hamlin N."/>
            <person name="Davies R."/>
            <person name="Gaudet P."/>
            <person name="Fey P."/>
            <person name="Pilcher K."/>
            <person name="Chen G."/>
            <person name="Saunders D."/>
            <person name="Sodergren E.J."/>
            <person name="Davis P."/>
            <person name="Kerhornou A."/>
            <person name="Nie X."/>
            <person name="Hall N."/>
            <person name="Anjard C."/>
            <person name="Hemphill L."/>
            <person name="Bason N."/>
            <person name="Farbrother P."/>
            <person name="Desany B."/>
            <person name="Just E."/>
            <person name="Morio T."/>
            <person name="Rost R."/>
            <person name="Churcher C.M."/>
            <person name="Cooper J."/>
            <person name="Haydock S."/>
            <person name="van Driessche N."/>
            <person name="Cronin A."/>
            <person name="Goodhead I."/>
            <person name="Muzny D.M."/>
            <person name="Mourier T."/>
            <person name="Pain A."/>
            <person name="Lu M."/>
            <person name="Harper D."/>
            <person name="Lindsay R."/>
            <person name="Hauser H."/>
            <person name="James K.D."/>
            <person name="Quiles M."/>
            <person name="Madan Babu M."/>
            <person name="Saito T."/>
            <person name="Buchrieser C."/>
            <person name="Wardroper A."/>
            <person name="Felder M."/>
            <person name="Thangavelu M."/>
            <person name="Johnson D."/>
            <person name="Knights A."/>
            <person name="Loulseged H."/>
            <person name="Mungall K.L."/>
            <person name="Oliver K."/>
            <person name="Price C."/>
            <person name="Quail M.A."/>
            <person name="Urushihara H."/>
            <person name="Hernandez J."/>
            <person name="Rabbinowitsch E."/>
            <person name="Steffen D."/>
            <person name="Sanders M."/>
            <person name="Ma J."/>
            <person name="Kohara Y."/>
            <person name="Sharp S."/>
            <person name="Simmonds M.N."/>
            <person name="Spiegler S."/>
            <person name="Tivey A."/>
            <person name="Sugano S."/>
            <person name="White B."/>
            <person name="Walker D."/>
            <person name="Woodward J.R."/>
            <person name="Winckler T."/>
            <person name="Tanaka Y."/>
            <person name="Shaulsky G."/>
            <person name="Schleicher M."/>
            <person name="Weinstock G.M."/>
            <person name="Rosenthal A."/>
            <person name="Cox E.C."/>
            <person name="Chisholm R.L."/>
            <person name="Gibbs R.A."/>
            <person name="Loomis W.F."/>
            <person name="Platzer M."/>
            <person name="Kay R.R."/>
            <person name="Williams J.G."/>
            <person name="Dear P.H."/>
            <person name="Noegel A.A."/>
            <person name="Barrell B.G."/>
            <person name="Kuspa A."/>
        </authorList>
    </citation>
    <scope>NUCLEOTIDE SEQUENCE [LARGE SCALE GENOMIC DNA]</scope>
    <source>
        <strain>AX4</strain>
    </source>
</reference>
<reference key="3">
    <citation type="journal article" date="2002" name="Cell">
        <title>Role of phosphatidylinositol(4,5)bisphosphate organization in membrane transport by the Unc104 kinesin motor.</title>
        <authorList>
            <person name="Klopfenstein D.R."/>
            <person name="Tomishige M."/>
            <person name="Stuurman N."/>
            <person name="Vale R.D."/>
        </authorList>
    </citation>
    <scope>FUNCTION</scope>
    <scope>SUBCELLULAR LOCATION</scope>
    <scope>DOMAINS</scope>
    <scope>MUTAGENESIS OF 1530-LYS--LYS-1533</scope>
</reference>
<reference key="4">
    <citation type="journal article" date="2003" name="BMC Genomics">
        <title>Identification and phylogenetic analysis of Dictyostelium discoideum kinesin proteins.</title>
        <authorList>
            <person name="Kollmar M."/>
            <person name="Gloeckner G."/>
        </authorList>
    </citation>
    <scope>IDENTIFICATION</scope>
    <scope>NOMENCLATURE</scope>
</reference>
<name>KIF1_DICDI</name>
<organism>
    <name type="scientific">Dictyostelium discoideum</name>
    <name type="common">Social amoeba</name>
    <dbReference type="NCBI Taxonomy" id="44689"/>
    <lineage>
        <taxon>Eukaryota</taxon>
        <taxon>Amoebozoa</taxon>
        <taxon>Evosea</taxon>
        <taxon>Eumycetozoa</taxon>
        <taxon>Dictyostelia</taxon>
        <taxon>Dictyosteliales</taxon>
        <taxon>Dictyosteliaceae</taxon>
        <taxon>Dictyostelium</taxon>
    </lineage>
</organism>
<protein>
    <recommendedName>
        <fullName>Kinesin-related protein 1</fullName>
    </recommendedName>
    <alternativeName>
        <fullName>Kinesin family member 1</fullName>
    </alternativeName>
    <alternativeName>
        <fullName>Kinesin-3</fullName>
    </alternativeName>
</protein>
<proteinExistence type="evidence at protein level"/>
<gene>
    <name type="primary">kif1</name>
    <name type="synonym">kif1A</name>
    <name type="synonym">unc104</name>
    <name type="ORF">DDB_G0290963</name>
</gene>